<protein>
    <recommendedName>
        <fullName>LIM domain-binding protein 1-A</fullName>
        <shortName>LDB-1-A</shortName>
    </recommendedName>
    <alternativeName>
        <fullName>LIM domain-binding protein 4</fullName>
        <shortName>LDB-4</shortName>
        <shortName>zLdb4</shortName>
    </alternativeName>
</protein>
<accession>O73715</accession>
<accession>Q1EQX3</accession>
<accession>Q4V929</accession>
<accession>Q5XFY5</accession>
<sequence length="374" mass="42715">MLDRDVGPTPMYPPSYMEPGIGRHTPYGNQTDYRIFELNKRLQNWTEQDCDNLWWDAFTTEFFEDDAMLTITFCLEDGPKRYTIGRTLIPRYFRSIFEGGATELFYVLKHPKESFHNNFVSLDCDQCTMVTQNGKPMFTQVCVEGRLYLEFMFDDMMRIKTWHFSIRQHREVVPRSILAMHAQDPQMLDQLSKNITRCGLSNSTLNYLRLCVILEPMQELMSRHKTYSLSPRDCLKTCLFQKWQRMVAPPAEPARQAPNKRRKRKMSGGSTMSSGGGNNNNSNSKKKSPASSFALSSQDVMVVGEPTLMGGEFGDEDERLITRLENTQFDAANGIDDEDSFNSSPTMGTNSPWNSKAPSSQQGKNDNPSSQSSQ</sequence>
<feature type="chain" id="PRO_0000284774" description="LIM domain-binding protein 1-A">
    <location>
        <begin position="1"/>
        <end position="374"/>
    </location>
</feature>
<feature type="domain" description="LIM interaction domain (LID)" evidence="2">
    <location>
        <begin position="299"/>
        <end position="338"/>
    </location>
</feature>
<feature type="region of interest" description="Disordered" evidence="3">
    <location>
        <begin position="1"/>
        <end position="24"/>
    </location>
</feature>
<feature type="region of interest" description="Disordered" evidence="3">
    <location>
        <begin position="249"/>
        <end position="297"/>
    </location>
</feature>
<feature type="region of interest" description="Disordered" evidence="3">
    <location>
        <begin position="322"/>
        <end position="374"/>
    </location>
</feature>
<feature type="compositionally biased region" description="Low complexity" evidence="3">
    <location>
        <begin position="267"/>
        <end position="297"/>
    </location>
</feature>
<feature type="compositionally biased region" description="Polar residues" evidence="3">
    <location>
        <begin position="341"/>
        <end position="374"/>
    </location>
</feature>
<feature type="splice variant" id="VSP_052330" description="In isoform c." evidence="7">
    <original>M</original>
    <variation>MHQNAAGCACRPVCTYCCSSKSFKLYSPKEPPNGSAFPPFHPGAM</variation>
    <location>
        <position position="1"/>
    </location>
</feature>
<feature type="splice variant" id="VSP_052331" description="In isoform d." evidence="7">
    <original>Q</original>
    <variation>QVP</variation>
    <location>
        <position position="298"/>
    </location>
</feature>
<feature type="splice variant" id="VSP_052332" description="In isoform b, isoform c and isoform d." evidence="6 7">
    <original>DVMVVGEPTLMGGEFGD</original>
    <variation>DLVGTKTCTVPELEDRS</variation>
    <location>
        <begin position="299"/>
        <end position="315"/>
    </location>
</feature>
<feature type="splice variant" id="VSP_052333" description="In isoform b, isoform c and isoform d." evidence="6 7">
    <location>
        <begin position="316"/>
        <end position="374"/>
    </location>
</feature>
<feature type="sequence conflict" description="In Ref. 3; AAH84686." evidence="8" ref="3">
    <location>
        <position position="48"/>
    </location>
</feature>
<feature type="sequence conflict" description="In Ref. 3; AAH97093." evidence="8" ref="3">
    <original>F</original>
    <variation>V</variation>
    <location>
        <position position="240"/>
    </location>
</feature>
<dbReference type="EMBL" id="AF031378">
    <property type="protein sequence ID" value="AAC15798.1"/>
    <property type="molecule type" value="mRNA"/>
</dbReference>
<dbReference type="EMBL" id="AB250382">
    <property type="protein sequence ID" value="BAE95400.1"/>
    <property type="molecule type" value="mRNA"/>
</dbReference>
<dbReference type="EMBL" id="BC084686">
    <property type="protein sequence ID" value="AAH84686.1"/>
    <property type="status" value="ALT_INIT"/>
    <property type="molecule type" value="mRNA"/>
</dbReference>
<dbReference type="EMBL" id="BC097093">
    <property type="protein sequence ID" value="AAH97093.1"/>
    <property type="molecule type" value="mRNA"/>
</dbReference>
<dbReference type="RefSeq" id="NP_571391.1">
    <molecule id="O73715-1"/>
    <property type="nucleotide sequence ID" value="NM_131316.1"/>
</dbReference>
<dbReference type="SMR" id="O73715"/>
<dbReference type="FunCoup" id="O73715">
    <property type="interactions" value="2607"/>
</dbReference>
<dbReference type="STRING" id="7955.ENSDARP00000003158"/>
<dbReference type="PaxDb" id="7955-ENSDARP00000107739"/>
<dbReference type="Ensembl" id="ENSDART00000015773">
    <molecule id="O73715-1"/>
    <property type="protein sequence ID" value="ENSDARP00000003158"/>
    <property type="gene ID" value="ENSDARG00000010137"/>
</dbReference>
<dbReference type="GeneID" id="30579"/>
<dbReference type="KEGG" id="dre:30579"/>
<dbReference type="AGR" id="ZFIN:ZDB-GENE-990415-138"/>
<dbReference type="CTD" id="30579"/>
<dbReference type="ZFIN" id="ZDB-GENE-990415-138">
    <property type="gene designation" value="ldb1a"/>
</dbReference>
<dbReference type="eggNOG" id="KOG2181">
    <property type="taxonomic scope" value="Eukaryota"/>
</dbReference>
<dbReference type="HOGENOM" id="CLU_032597_0_0_1"/>
<dbReference type="InParanoid" id="O73715"/>
<dbReference type="OMA" id="PHGANIP"/>
<dbReference type="OrthoDB" id="774557at2759"/>
<dbReference type="PhylomeDB" id="O73715"/>
<dbReference type="PRO" id="PR:O73715"/>
<dbReference type="Proteomes" id="UP000000437">
    <property type="component" value="Chromosome 13"/>
</dbReference>
<dbReference type="Bgee" id="ENSDARG00000010137">
    <property type="expression patterns" value="Expressed in retina and 25 other cell types or tissues"/>
</dbReference>
<dbReference type="ExpressionAtlas" id="O73715">
    <property type="expression patterns" value="baseline"/>
</dbReference>
<dbReference type="GO" id="GO:0005634">
    <property type="term" value="C:nucleus"/>
    <property type="evidence" value="ECO:0000314"/>
    <property type="project" value="UniProtKB"/>
</dbReference>
<dbReference type="GO" id="GO:0005667">
    <property type="term" value="C:transcription regulator complex"/>
    <property type="evidence" value="ECO:0000318"/>
    <property type="project" value="GO_Central"/>
</dbReference>
<dbReference type="GO" id="GO:0030274">
    <property type="term" value="F:LIM domain binding"/>
    <property type="evidence" value="ECO:0000314"/>
    <property type="project" value="ZFIN"/>
</dbReference>
<dbReference type="GO" id="GO:0003712">
    <property type="term" value="F:transcription coregulator activity"/>
    <property type="evidence" value="ECO:0000318"/>
    <property type="project" value="GO_Central"/>
</dbReference>
<dbReference type="GO" id="GO:0000122">
    <property type="term" value="P:negative regulation of transcription by RNA polymerase II"/>
    <property type="evidence" value="ECO:0000318"/>
    <property type="project" value="GO_Central"/>
</dbReference>
<dbReference type="GO" id="GO:0007399">
    <property type="term" value="P:nervous system development"/>
    <property type="evidence" value="ECO:0000318"/>
    <property type="project" value="GO_Central"/>
</dbReference>
<dbReference type="GO" id="GO:0045944">
    <property type="term" value="P:positive regulation of transcription by RNA polymerase II"/>
    <property type="evidence" value="ECO:0000318"/>
    <property type="project" value="GO_Central"/>
</dbReference>
<dbReference type="FunFam" id="2.10.110.10:FF:000063">
    <property type="entry name" value="LIM domain-binding protein 2 isoform X2"/>
    <property type="match status" value="1"/>
</dbReference>
<dbReference type="Gene3D" id="2.10.110.10">
    <property type="entry name" value="Cysteine Rich Protein"/>
    <property type="match status" value="1"/>
</dbReference>
<dbReference type="InterPro" id="IPR041363">
    <property type="entry name" value="LID"/>
</dbReference>
<dbReference type="InterPro" id="IPR029005">
    <property type="entry name" value="LIM-bd/SEUSS"/>
</dbReference>
<dbReference type="PANTHER" id="PTHR10378">
    <property type="entry name" value="LIM DOMAIN-BINDING PROTEIN"/>
    <property type="match status" value="1"/>
</dbReference>
<dbReference type="Pfam" id="PF17916">
    <property type="entry name" value="LID"/>
    <property type="match status" value="1"/>
</dbReference>
<dbReference type="Pfam" id="PF01803">
    <property type="entry name" value="LIM_bind"/>
    <property type="match status" value="1"/>
</dbReference>
<dbReference type="PROSITE" id="PS51957">
    <property type="entry name" value="LID"/>
    <property type="match status" value="1"/>
</dbReference>
<evidence type="ECO:0000255" key="1"/>
<evidence type="ECO:0000255" key="2">
    <source>
        <dbReference type="PROSITE-ProRule" id="PRU01302"/>
    </source>
</evidence>
<evidence type="ECO:0000256" key="3">
    <source>
        <dbReference type="SAM" id="MobiDB-lite"/>
    </source>
</evidence>
<evidence type="ECO:0000269" key="4">
    <source>
    </source>
</evidence>
<evidence type="ECO:0000269" key="5">
    <source>
    </source>
</evidence>
<evidence type="ECO:0000303" key="6">
    <source>
    </source>
</evidence>
<evidence type="ECO:0000303" key="7">
    <source ref="3"/>
</evidence>
<evidence type="ECO:0000305" key="8"/>
<evidence type="ECO:0000312" key="9">
    <source>
        <dbReference type="EMBL" id="AAC15798.1"/>
    </source>
</evidence>
<evidence type="ECO:0000312" key="10">
    <source>
        <dbReference type="EMBL" id="AAH84686.1"/>
    </source>
</evidence>
<evidence type="ECO:0000312" key="11">
    <source>
        <dbReference type="EMBL" id="AAH97093.1"/>
    </source>
</evidence>
<evidence type="ECO:0000312" key="12">
    <source>
        <dbReference type="EMBL" id="BAE95400.1"/>
    </source>
</evidence>
<reference evidence="8 9" key="1">
    <citation type="journal article" date="1998" name="Mech. Dev.">
        <title>Expression of LIM-domain binding protein (ldb) genes during zebrafish embryogenesis.</title>
        <authorList>
            <person name="Toyama R."/>
            <person name="Kobayashi M."/>
            <person name="Tomita T."/>
            <person name="Dawid I.B."/>
        </authorList>
    </citation>
    <scope>NUCLEOTIDE SEQUENCE [MRNA] (ISOFORM A)</scope>
    <scope>TISSUE SPECIFICITY</scope>
</reference>
<reference evidence="8 12" key="2">
    <citation type="journal article" date="2006" name="J. Biochem.">
        <title>Spliced isoforms of LIM-domain-binding protein (CLIM/NLI/Ldb) lacking the LIM-interaction domain.</title>
        <authorList>
            <person name="Tran Y.H."/>
            <person name="Xu Z."/>
            <person name="Kato A."/>
            <person name="Mistry A.C."/>
            <person name="Goya Y."/>
            <person name="Taira M."/>
            <person name="Brandt S.J."/>
            <person name="Hirose S."/>
        </authorList>
    </citation>
    <scope>NUCLEOTIDE SEQUENCE [MRNA] (ISOFORM B)</scope>
    <scope>SUBCELLULAR LOCATION</scope>
    <scope>ALTERNATIVE SPLICING</scope>
    <scope>TISSUE SPECIFICITY</scope>
    <source>
        <tissue evidence="4">Gill</tissue>
    </source>
</reference>
<reference evidence="8 10" key="3">
    <citation type="submission" date="2005-06" db="EMBL/GenBank/DDBJ databases">
        <authorList>
            <consortium name="NIH - Zebrafish Gene Collection (ZGC) project"/>
        </authorList>
    </citation>
    <scope>NUCLEOTIDE SEQUENCE [LARGE SCALE MRNA] (ISOFORMS C AND D)</scope>
    <source>
        <tissue evidence="11">Olfactory epithelium</tissue>
    </source>
</reference>
<organism>
    <name type="scientific">Danio rerio</name>
    <name type="common">Zebrafish</name>
    <name type="synonym">Brachydanio rerio</name>
    <dbReference type="NCBI Taxonomy" id="7955"/>
    <lineage>
        <taxon>Eukaryota</taxon>
        <taxon>Metazoa</taxon>
        <taxon>Chordata</taxon>
        <taxon>Craniata</taxon>
        <taxon>Vertebrata</taxon>
        <taxon>Euteleostomi</taxon>
        <taxon>Actinopterygii</taxon>
        <taxon>Neopterygii</taxon>
        <taxon>Teleostei</taxon>
        <taxon>Ostariophysi</taxon>
        <taxon>Cypriniformes</taxon>
        <taxon>Danionidae</taxon>
        <taxon>Danioninae</taxon>
        <taxon>Danio</taxon>
    </lineage>
</organism>
<name>LDB1A_DANRE</name>
<keyword id="KW-0025">Alternative splicing</keyword>
<keyword id="KW-0539">Nucleus</keyword>
<keyword id="KW-1185">Reference proteome</keyword>
<proteinExistence type="evidence at transcript level"/>
<gene>
    <name type="primary">ldb1a</name>
    <name type="synonym">ldb4</name>
</gene>
<comment type="function">
    <text evidence="8">Binds to the LIM domain of a wide variety of LIM domain-containing transcription factors.</text>
</comment>
<comment type="subcellular location">
    <subcellularLocation>
        <location evidence="4">Nucleus</location>
    </subcellularLocation>
</comment>
<comment type="alternative products">
    <event type="alternative splicing"/>
    <isoform>
        <id>O73715-1</id>
        <name evidence="5">a</name>
        <sequence type="displayed"/>
    </isoform>
    <isoform>
        <id>O73715-2</id>
        <name evidence="4">b</name>
        <sequence type="described" ref="VSP_052332 VSP_052333"/>
    </isoform>
    <isoform>
        <id>O73715-3</id>
        <name>c</name>
        <sequence type="described" ref="VSP_052330 VSP_052332 VSP_052333"/>
    </isoform>
    <isoform>
        <id>O73715-4</id>
        <name>d</name>
        <sequence type="described" ref="VSP_052331 VSP_052332 VSP_052333"/>
    </isoform>
</comment>
<comment type="tissue specificity">
    <text evidence="4 5">Expressed ubiquitously in the embryo and adult.</text>
</comment>
<comment type="miscellaneous">
    <molecule>Isoform b</molecule>
    <text evidence="4">Lacks LIM-binding domain.</text>
</comment>
<comment type="miscellaneous">
    <molecule>Isoform c</molecule>
    <text evidence="4 8">Lacks LIM-binding domain.</text>
</comment>
<comment type="miscellaneous">
    <molecule>Isoform d</molecule>
    <text evidence="4 8">Lacks LIM-binding domain.</text>
</comment>
<comment type="similarity">
    <text evidence="1">Belongs to the LDB family.</text>
</comment>
<comment type="sequence caution" evidence="8">
    <conflict type="erroneous initiation">
        <sequence resource="EMBL-CDS" id="AAH84686"/>
    </conflict>
</comment>